<feature type="chain" id="PRO_1000214682" description="Large ribosomal subunit protein uL18">
    <location>
        <begin position="1"/>
        <end position="118"/>
    </location>
</feature>
<sequence>MRSAKLKFEKRRSRIRHKISKTSHSVRLSIFKSGRHIYAQIIDDSKSITIAAASTLDEKIKKLKKSHCNIENAIKVGEEIAKKADSAGIQDVVFDRGGYKYHGVVKALADAAREKIKF</sequence>
<dbReference type="EMBL" id="CP001227">
    <property type="protein sequence ID" value="ACR47760.1"/>
    <property type="molecule type" value="Genomic_DNA"/>
</dbReference>
<dbReference type="RefSeq" id="WP_012736940.1">
    <property type="nucleotide sequence ID" value="NC_012730.1"/>
</dbReference>
<dbReference type="SMR" id="C4K2G3"/>
<dbReference type="KEGG" id="rpk:RPR_06150"/>
<dbReference type="HOGENOM" id="CLU_098841_0_1_5"/>
<dbReference type="Proteomes" id="UP000005015">
    <property type="component" value="Chromosome"/>
</dbReference>
<dbReference type="GO" id="GO:0022625">
    <property type="term" value="C:cytosolic large ribosomal subunit"/>
    <property type="evidence" value="ECO:0007669"/>
    <property type="project" value="TreeGrafter"/>
</dbReference>
<dbReference type="GO" id="GO:0008097">
    <property type="term" value="F:5S rRNA binding"/>
    <property type="evidence" value="ECO:0007669"/>
    <property type="project" value="TreeGrafter"/>
</dbReference>
<dbReference type="GO" id="GO:0003735">
    <property type="term" value="F:structural constituent of ribosome"/>
    <property type="evidence" value="ECO:0007669"/>
    <property type="project" value="InterPro"/>
</dbReference>
<dbReference type="GO" id="GO:0006412">
    <property type="term" value="P:translation"/>
    <property type="evidence" value="ECO:0007669"/>
    <property type="project" value="UniProtKB-UniRule"/>
</dbReference>
<dbReference type="CDD" id="cd00432">
    <property type="entry name" value="Ribosomal_L18_L5e"/>
    <property type="match status" value="1"/>
</dbReference>
<dbReference type="FunFam" id="3.30.420.100:FF:000001">
    <property type="entry name" value="50S ribosomal protein L18"/>
    <property type="match status" value="1"/>
</dbReference>
<dbReference type="Gene3D" id="3.30.420.100">
    <property type="match status" value="1"/>
</dbReference>
<dbReference type="HAMAP" id="MF_01337_B">
    <property type="entry name" value="Ribosomal_uL18_B"/>
    <property type="match status" value="1"/>
</dbReference>
<dbReference type="InterPro" id="IPR004389">
    <property type="entry name" value="Ribosomal_uL18_bac-type"/>
</dbReference>
<dbReference type="InterPro" id="IPR005484">
    <property type="entry name" value="Ribosomal_uL18_bac/euk"/>
</dbReference>
<dbReference type="NCBIfam" id="TIGR00060">
    <property type="entry name" value="L18_bact"/>
    <property type="match status" value="1"/>
</dbReference>
<dbReference type="PANTHER" id="PTHR12899">
    <property type="entry name" value="39S RIBOSOMAL PROTEIN L18, MITOCHONDRIAL"/>
    <property type="match status" value="1"/>
</dbReference>
<dbReference type="PANTHER" id="PTHR12899:SF3">
    <property type="entry name" value="LARGE RIBOSOMAL SUBUNIT PROTEIN UL18M"/>
    <property type="match status" value="1"/>
</dbReference>
<dbReference type="Pfam" id="PF00861">
    <property type="entry name" value="Ribosomal_L18p"/>
    <property type="match status" value="1"/>
</dbReference>
<dbReference type="SUPFAM" id="SSF53137">
    <property type="entry name" value="Translational machinery components"/>
    <property type="match status" value="1"/>
</dbReference>
<name>RL18_RICPU</name>
<gene>
    <name evidence="1" type="primary">rplR</name>
    <name type="ordered locus">RPR_06150</name>
</gene>
<proteinExistence type="inferred from homology"/>
<organism>
    <name type="scientific">Rickettsia peacockii (strain Rustic)</name>
    <dbReference type="NCBI Taxonomy" id="562019"/>
    <lineage>
        <taxon>Bacteria</taxon>
        <taxon>Pseudomonadati</taxon>
        <taxon>Pseudomonadota</taxon>
        <taxon>Alphaproteobacteria</taxon>
        <taxon>Rickettsiales</taxon>
        <taxon>Rickettsiaceae</taxon>
        <taxon>Rickettsieae</taxon>
        <taxon>Rickettsia</taxon>
        <taxon>spotted fever group</taxon>
    </lineage>
</organism>
<protein>
    <recommendedName>
        <fullName evidence="1">Large ribosomal subunit protein uL18</fullName>
    </recommendedName>
    <alternativeName>
        <fullName evidence="2">50S ribosomal protein L18</fullName>
    </alternativeName>
</protein>
<keyword id="KW-0687">Ribonucleoprotein</keyword>
<keyword id="KW-0689">Ribosomal protein</keyword>
<keyword id="KW-0694">RNA-binding</keyword>
<keyword id="KW-0699">rRNA-binding</keyword>
<reference key="1">
    <citation type="journal article" date="2009" name="PLoS ONE">
        <title>Genome sequence of the endosymbiont Rickettsia peacockii and comparison with virulent Rickettsia rickettsii: identification of virulence factors.</title>
        <authorList>
            <person name="Felsheim R.F."/>
            <person name="Kurtti T.J."/>
            <person name="Munderloh U.G."/>
        </authorList>
    </citation>
    <scope>NUCLEOTIDE SEQUENCE [LARGE SCALE GENOMIC DNA]</scope>
    <source>
        <strain>Rustic</strain>
    </source>
</reference>
<evidence type="ECO:0000255" key="1">
    <source>
        <dbReference type="HAMAP-Rule" id="MF_01337"/>
    </source>
</evidence>
<evidence type="ECO:0000305" key="2"/>
<comment type="function">
    <text evidence="1">This is one of the proteins that bind and probably mediate the attachment of the 5S RNA into the large ribosomal subunit, where it forms part of the central protuberance.</text>
</comment>
<comment type="subunit">
    <text evidence="1">Part of the 50S ribosomal subunit; part of the 5S rRNA/L5/L18/L25 subcomplex. Contacts the 5S and 23S rRNAs.</text>
</comment>
<comment type="similarity">
    <text evidence="1">Belongs to the universal ribosomal protein uL18 family.</text>
</comment>
<accession>C4K2G3</accession>